<evidence type="ECO:0000256" key="1">
    <source>
        <dbReference type="SAM" id="MobiDB-lite"/>
    </source>
</evidence>
<evidence type="ECO:0000269" key="2">
    <source>
    </source>
</evidence>
<evidence type="ECO:0000269" key="3">
    <source>
    </source>
</evidence>
<evidence type="ECO:0000305" key="4"/>
<evidence type="ECO:0007744" key="5">
    <source>
    </source>
</evidence>
<gene>
    <name type="primary">DGR2</name>
    <name type="ordered locus">YKL121W</name>
    <name type="ORF">YKL525</name>
</gene>
<keyword id="KW-0597">Phosphoprotein</keyword>
<keyword id="KW-1185">Reference proteome</keyword>
<keyword id="KW-0677">Repeat</keyword>
<keyword id="KW-0853">WD repeat</keyword>
<dbReference type="EMBL" id="S44213">
    <property type="protein sequence ID" value="AAB23072.2"/>
    <property type="molecule type" value="Genomic_DNA"/>
</dbReference>
<dbReference type="EMBL" id="Z28121">
    <property type="protein sequence ID" value="CAA81962.1"/>
    <property type="molecule type" value="Genomic_DNA"/>
</dbReference>
<dbReference type="EMBL" id="BK006944">
    <property type="protein sequence ID" value="DAA09039.1"/>
    <property type="molecule type" value="Genomic_DNA"/>
</dbReference>
<dbReference type="PIR" id="S25359">
    <property type="entry name" value="S25359"/>
</dbReference>
<dbReference type="RefSeq" id="NP_012801.1">
    <property type="nucleotide sequence ID" value="NM_001179687.1"/>
</dbReference>
<dbReference type="BioGRID" id="34014">
    <property type="interactions" value="139"/>
</dbReference>
<dbReference type="FunCoup" id="P32330">
    <property type="interactions" value="68"/>
</dbReference>
<dbReference type="IntAct" id="P32330">
    <property type="interactions" value="6"/>
</dbReference>
<dbReference type="STRING" id="4932.YKL121W"/>
<dbReference type="iPTMnet" id="P32330"/>
<dbReference type="PaxDb" id="4932-YKL121W"/>
<dbReference type="PeptideAtlas" id="P32330"/>
<dbReference type="EnsemblFungi" id="YKL121W_mRNA">
    <property type="protein sequence ID" value="YKL121W"/>
    <property type="gene ID" value="YKL121W"/>
</dbReference>
<dbReference type="GeneID" id="853738"/>
<dbReference type="KEGG" id="sce:YKL121W"/>
<dbReference type="AGR" id="SGD:S000001604"/>
<dbReference type="SGD" id="S000001604">
    <property type="gene designation" value="DGR2"/>
</dbReference>
<dbReference type="VEuPathDB" id="FungiDB:YKL121W"/>
<dbReference type="eggNOG" id="KOG0283">
    <property type="taxonomic scope" value="Eukaryota"/>
</dbReference>
<dbReference type="GeneTree" id="ENSGT00940000157557"/>
<dbReference type="HOGENOM" id="CLU_008245_0_0_1"/>
<dbReference type="InParanoid" id="P32330"/>
<dbReference type="OMA" id="WKVINSP"/>
<dbReference type="OrthoDB" id="1932312at2759"/>
<dbReference type="BioCyc" id="YEAST:G3O-31904-MONOMER"/>
<dbReference type="BioGRID-ORCS" id="853738">
    <property type="hits" value="0 hits in 10 CRISPR screens"/>
</dbReference>
<dbReference type="PRO" id="PR:P32330"/>
<dbReference type="Proteomes" id="UP000002311">
    <property type="component" value="Chromosome XI"/>
</dbReference>
<dbReference type="RNAct" id="P32330">
    <property type="molecule type" value="protein"/>
</dbReference>
<dbReference type="FunFam" id="2.130.10.10:FF:000613">
    <property type="entry name" value="YKL121W-like protein"/>
    <property type="match status" value="1"/>
</dbReference>
<dbReference type="Gene3D" id="2.130.10.10">
    <property type="entry name" value="YVTN repeat-like/Quinoprotein amine dehydrogenase"/>
    <property type="match status" value="1"/>
</dbReference>
<dbReference type="InterPro" id="IPR015943">
    <property type="entry name" value="WD40/YVTN_repeat-like_dom_sf"/>
</dbReference>
<dbReference type="InterPro" id="IPR036322">
    <property type="entry name" value="WD40_repeat_dom_sf"/>
</dbReference>
<dbReference type="InterPro" id="IPR001680">
    <property type="entry name" value="WD40_rpt"/>
</dbReference>
<dbReference type="InterPro" id="IPR040324">
    <property type="entry name" value="WDR44/Dgr2"/>
</dbReference>
<dbReference type="PANTHER" id="PTHR14221">
    <property type="entry name" value="WD REPEAT DOMAIN 44"/>
    <property type="match status" value="1"/>
</dbReference>
<dbReference type="PANTHER" id="PTHR14221:SF0">
    <property type="entry name" value="WD REPEAT-CONTAINING PROTEIN 44"/>
    <property type="match status" value="1"/>
</dbReference>
<dbReference type="Pfam" id="PF00400">
    <property type="entry name" value="WD40"/>
    <property type="match status" value="3"/>
</dbReference>
<dbReference type="SMART" id="SM00320">
    <property type="entry name" value="WD40"/>
    <property type="match status" value="4"/>
</dbReference>
<dbReference type="SUPFAM" id="SSF50978">
    <property type="entry name" value="WD40 repeat-like"/>
    <property type="match status" value="2"/>
</dbReference>
<dbReference type="PROSITE" id="PS50082">
    <property type="entry name" value="WD_REPEATS_2"/>
    <property type="match status" value="1"/>
</dbReference>
<dbReference type="PROSITE" id="PS50294">
    <property type="entry name" value="WD_REPEATS_REGION"/>
    <property type="match status" value="1"/>
</dbReference>
<reference key="1">
    <citation type="journal article" date="1992" name="Yeast">
        <title>Sequence of a segment of yeast chromosome XI identifies a new mitochondrial carrier, a new member of the G protein family, and a protein with the PAAKK motif of the H1 histones.</title>
        <authorList>
            <person name="Colleaux L."/>
            <person name="Richard G.-F."/>
            <person name="Thierry A."/>
            <person name="Dujon B."/>
        </authorList>
    </citation>
    <scope>NUCLEOTIDE SEQUENCE [GENOMIC DNA]</scope>
</reference>
<reference key="2">
    <citation type="journal article" date="1994" name="Nature">
        <title>Complete DNA sequence of yeast chromosome XI.</title>
        <authorList>
            <person name="Dujon B."/>
            <person name="Alexandraki D."/>
            <person name="Andre B."/>
            <person name="Ansorge W."/>
            <person name="Baladron V."/>
            <person name="Ballesta J.P.G."/>
            <person name="Banrevi A."/>
            <person name="Bolle P.-A."/>
            <person name="Bolotin-Fukuhara M."/>
            <person name="Bossier P."/>
            <person name="Bou G."/>
            <person name="Boyer J."/>
            <person name="Buitrago M.J."/>
            <person name="Cheret G."/>
            <person name="Colleaux L."/>
            <person name="Daignan-Fornier B."/>
            <person name="del Rey F."/>
            <person name="Dion C."/>
            <person name="Domdey H."/>
            <person name="Duesterhoeft A."/>
            <person name="Duesterhus S."/>
            <person name="Entian K.-D."/>
            <person name="Erfle H."/>
            <person name="Esteban P.F."/>
            <person name="Feldmann H."/>
            <person name="Fernandes L."/>
            <person name="Fobo G.M."/>
            <person name="Fritz C."/>
            <person name="Fukuhara H."/>
            <person name="Gabel C."/>
            <person name="Gaillon L."/>
            <person name="Garcia-Cantalejo J.M."/>
            <person name="Garcia-Ramirez J.J."/>
            <person name="Gent M.E."/>
            <person name="Ghazvini M."/>
            <person name="Goffeau A."/>
            <person name="Gonzalez A."/>
            <person name="Grothues D."/>
            <person name="Guerreiro P."/>
            <person name="Hegemann J.H."/>
            <person name="Hewitt N."/>
            <person name="Hilger F."/>
            <person name="Hollenberg C.P."/>
            <person name="Horaitis O."/>
            <person name="Indge K.J."/>
            <person name="Jacquier A."/>
            <person name="James C.M."/>
            <person name="Jauniaux J.-C."/>
            <person name="Jimenez A."/>
            <person name="Keuchel H."/>
            <person name="Kirchrath L."/>
            <person name="Kleine K."/>
            <person name="Koetter P."/>
            <person name="Legrain P."/>
            <person name="Liebl S."/>
            <person name="Louis E.J."/>
            <person name="Maia e Silva A."/>
            <person name="Marck C."/>
            <person name="Monnier A.-L."/>
            <person name="Moestl D."/>
            <person name="Mueller S."/>
            <person name="Obermaier B."/>
            <person name="Oliver S.G."/>
            <person name="Pallier C."/>
            <person name="Pascolo S."/>
            <person name="Pfeiffer F."/>
            <person name="Philippsen P."/>
            <person name="Planta R.J."/>
            <person name="Pohl F.M."/>
            <person name="Pohl T.M."/>
            <person name="Poehlmann R."/>
            <person name="Portetelle D."/>
            <person name="Purnelle B."/>
            <person name="Puzos V."/>
            <person name="Ramezani Rad M."/>
            <person name="Rasmussen S.W."/>
            <person name="Remacha M.A."/>
            <person name="Revuelta J.L."/>
            <person name="Richard G.-F."/>
            <person name="Rieger M."/>
            <person name="Rodrigues-Pousada C."/>
            <person name="Rose M."/>
            <person name="Rupp T."/>
            <person name="Santos M.A."/>
            <person name="Schwager C."/>
            <person name="Sensen C."/>
            <person name="Skala J."/>
            <person name="Soares H."/>
            <person name="Sor F."/>
            <person name="Stegemann J."/>
            <person name="Tettelin H."/>
            <person name="Thierry A."/>
            <person name="Tzermia M."/>
            <person name="Urrestarazu L.A."/>
            <person name="van Dyck L."/>
            <person name="van Vliet-Reedijk J.C."/>
            <person name="Valens M."/>
            <person name="Vandenbol M."/>
            <person name="Vilela C."/>
            <person name="Vissers S."/>
            <person name="von Wettstein D."/>
            <person name="Voss H."/>
            <person name="Wiemann S."/>
            <person name="Xu G."/>
            <person name="Zimmermann J."/>
            <person name="Haasemann M."/>
            <person name="Becker I."/>
            <person name="Mewes H.-W."/>
        </authorList>
    </citation>
    <scope>NUCLEOTIDE SEQUENCE [LARGE SCALE GENOMIC DNA]</scope>
    <source>
        <strain>ATCC 204508 / S288c</strain>
    </source>
</reference>
<reference key="3">
    <citation type="journal article" date="2014" name="G3 (Bethesda)">
        <title>The reference genome sequence of Saccharomyces cerevisiae: Then and now.</title>
        <authorList>
            <person name="Engel S.R."/>
            <person name="Dietrich F.S."/>
            <person name="Fisk D.G."/>
            <person name="Binkley G."/>
            <person name="Balakrishnan R."/>
            <person name="Costanzo M.C."/>
            <person name="Dwight S.S."/>
            <person name="Hitz B.C."/>
            <person name="Karra K."/>
            <person name="Nash R.S."/>
            <person name="Weng S."/>
            <person name="Wong E.D."/>
            <person name="Lloyd P."/>
            <person name="Skrzypek M.S."/>
            <person name="Miyasato S.R."/>
            <person name="Simison M."/>
            <person name="Cherry J.M."/>
        </authorList>
    </citation>
    <scope>GENOME REANNOTATION</scope>
    <source>
        <strain>ATCC 204508 / S288c</strain>
    </source>
</reference>
<reference key="4">
    <citation type="journal article" date="2003" name="Nature">
        <title>Global analysis of protein expression in yeast.</title>
        <authorList>
            <person name="Ghaemmaghami S."/>
            <person name="Huh W.-K."/>
            <person name="Bower K."/>
            <person name="Howson R.W."/>
            <person name="Belle A."/>
            <person name="Dephoure N."/>
            <person name="O'Shea E.K."/>
            <person name="Weissman J.S."/>
        </authorList>
    </citation>
    <scope>LEVEL OF PROTEIN EXPRESSION [LARGE SCALE ANALYSIS]</scope>
</reference>
<reference key="5">
    <citation type="journal article" date="2008" name="Mol. Cell. Proteomics">
        <title>A multidimensional chromatography technology for in-depth phosphoproteome analysis.</title>
        <authorList>
            <person name="Albuquerque C.P."/>
            <person name="Smolka M.B."/>
            <person name="Payne S.H."/>
            <person name="Bafna V."/>
            <person name="Eng J."/>
            <person name="Zhou H."/>
        </authorList>
    </citation>
    <scope>IDENTIFICATION BY MASS SPECTROMETRY [LARGE SCALE ANALYSIS]</scope>
</reference>
<reference key="6">
    <citation type="journal article" date="2008" name="Proc. Natl. Acad. Sci. U.S.A.">
        <title>A catabolic block does not sufficiently explain how 2-deoxy-D-glucose inhibits cell growth.</title>
        <authorList>
            <person name="Ralser M."/>
            <person name="Wamelink M.M."/>
            <person name="Struys E.A."/>
            <person name="Joppich C."/>
            <person name="Krobitsch S."/>
            <person name="Jakobs C."/>
            <person name="Lehrach H."/>
        </authorList>
    </citation>
    <scope>DISRUPTION PHENOTYPE</scope>
</reference>
<reference key="7">
    <citation type="journal article" date="2009" name="Science">
        <title>Global analysis of Cdk1 substrate phosphorylation sites provides insights into evolution.</title>
        <authorList>
            <person name="Holt L.J."/>
            <person name="Tuch B.B."/>
            <person name="Villen J."/>
            <person name="Johnson A.D."/>
            <person name="Gygi S.P."/>
            <person name="Morgan D.O."/>
        </authorList>
    </citation>
    <scope>PHOSPHORYLATION [LARGE SCALE ANALYSIS] AT SER-716</scope>
    <scope>IDENTIFICATION BY MASS SPECTROMETRY [LARGE SCALE ANALYSIS]</scope>
</reference>
<protein>
    <recommendedName>
        <fullName>2-deoxy-glucose resistant protein 2</fullName>
    </recommendedName>
</protein>
<name>DGR2_YEAST</name>
<sequence length="852" mass="96022">MFKSKTSTLSYDETPNSNEGDRNATPVNPKEKSQTKHLNIPGDRSRHSSIADSKRSSSRYDGGYSADIIPAQLRFIDNIDYGTRLRKTLHRNSVVSNGYNKLSENDRWYFDLFDRKYFENYLEEPTYIKIFKKKEGLEQFDRMFLAQELKIPDVYKSTTYQGEPAVANSELFKNSICCCTFSHDGKYMVIGCKDGSLHLWKVINSPVKRSEMGRSEKSVSASRANSLKIQRHLASISSHNGSISSNDLKPSDQFEGPSKQLHLYAPVFYSDVFRVFMEHALDILDANWSKNGFLITASMDKTAKLWHPERKYSLKTFVHPDFVTSAIFFPNDDRFIITGCLDHRCRLWSILDNEVSYAFDCKDLITSLTLSPPGGEYTIIGTFNGYIYVLLTHGLKFVSSFHVSDKSTQGTTKNSFHPSSEYGKVQHGPRITGLQCFFSKVDKNLRLIVTTNDSKIQIFDLNEKKPLELFKGFQSGSSRHRGQFLMMKNEPVVFTGSDDHWFYTWKMQSFNLSAEMNCTAPHRKKRLSGSMSLKGLLRIVSNKSTNDECLTETSNQSSSHTFTNSSKNVLQTQTVGSQAIKNNHYISFHAHNSPVTCASIAPDVAIKNLSLSNDLIFELTSQYFKEMGQNYSESKETCDNKPNHPVTETGGFSSNLSNVVNNVGTILITTDSQGLIRVFRTDILPEIRKKIIEKFHEYNLFHLEAAGKINNHNNDSILENRMDERSSTEDNEFSTTPPSNTHNSRPSHDFCELHPNNSPVISGMPSRASAIFKNSIFNKSNGSFISLKSRSESTSSTVFGPHDIPRVSTTYPKLKCDVCNGSNFECASKNPIAGGDSGFTCADCGTILNNFR</sequence>
<accession>P32330</accession>
<accession>D6VXG9</accession>
<comment type="disruption phenotype">
    <text evidence="3">Increases cellular tolerance to 2-deoxy-glucose.</text>
</comment>
<comment type="miscellaneous">
    <text evidence="2">Present with 504 molecules/cell in log phase SD medium.</text>
</comment>
<comment type="similarity">
    <text evidence="4">Belongs to the WD repeat DGR2 family.</text>
</comment>
<feature type="chain" id="PRO_0000051479" description="2-deoxy-glucose resistant protein 2">
    <location>
        <begin position="1"/>
        <end position="852"/>
    </location>
</feature>
<feature type="repeat" description="WD 1">
    <location>
        <begin position="171"/>
        <end position="210"/>
    </location>
</feature>
<feature type="repeat" description="WD 2">
    <location>
        <begin position="278"/>
        <end position="316"/>
    </location>
</feature>
<feature type="repeat" description="WD 3">
    <location>
        <begin position="318"/>
        <end position="358"/>
    </location>
</feature>
<feature type="repeat" description="WD 4">
    <location>
        <begin position="426"/>
        <end position="471"/>
    </location>
</feature>
<feature type="repeat" description="WD 5">
    <location>
        <begin position="476"/>
        <end position="515"/>
    </location>
</feature>
<feature type="repeat" description="WD 6">
    <location>
        <begin position="651"/>
        <end position="689"/>
    </location>
</feature>
<feature type="region of interest" description="Disordered" evidence="1">
    <location>
        <begin position="1"/>
        <end position="60"/>
    </location>
</feature>
<feature type="region of interest" description="Disordered" evidence="1">
    <location>
        <begin position="723"/>
        <end position="748"/>
    </location>
</feature>
<feature type="compositionally biased region" description="Polar residues" evidence="1">
    <location>
        <begin position="1"/>
        <end position="18"/>
    </location>
</feature>
<feature type="compositionally biased region" description="Polar residues" evidence="1">
    <location>
        <begin position="733"/>
        <end position="744"/>
    </location>
</feature>
<feature type="modified residue" description="Phosphoserine" evidence="5">
    <location>
        <position position="716"/>
    </location>
</feature>
<proteinExistence type="evidence at protein level"/>
<organism>
    <name type="scientific">Saccharomyces cerevisiae (strain ATCC 204508 / S288c)</name>
    <name type="common">Baker's yeast</name>
    <dbReference type="NCBI Taxonomy" id="559292"/>
    <lineage>
        <taxon>Eukaryota</taxon>
        <taxon>Fungi</taxon>
        <taxon>Dikarya</taxon>
        <taxon>Ascomycota</taxon>
        <taxon>Saccharomycotina</taxon>
        <taxon>Saccharomycetes</taxon>
        <taxon>Saccharomycetales</taxon>
        <taxon>Saccharomycetaceae</taxon>
        <taxon>Saccharomyces</taxon>
    </lineage>
</organism>